<name>ULA1_CHICK</name>
<reference key="1">
    <citation type="journal article" date="2005" name="Genome Biol.">
        <title>Full-length cDNAs from chicken bursal lymphocytes to facilitate gene function analysis.</title>
        <authorList>
            <person name="Caldwell R.B."/>
            <person name="Kierzek A.M."/>
            <person name="Arakawa H."/>
            <person name="Bezzubov Y."/>
            <person name="Zaim J."/>
            <person name="Fiedler P."/>
            <person name="Kutter S."/>
            <person name="Blagodatski A."/>
            <person name="Kostovska D."/>
            <person name="Koter M."/>
            <person name="Plachy J."/>
            <person name="Carninci P."/>
            <person name="Hayashizaki Y."/>
            <person name="Buerstedde J.-M."/>
        </authorList>
    </citation>
    <scope>NUCLEOTIDE SEQUENCE [LARGE SCALE MRNA]</scope>
    <source>
        <strain>CB</strain>
        <tissue>Bursa of Fabricius</tissue>
    </source>
</reference>
<comment type="function">
    <text evidence="2">Regulatory subunit of the dimeric UBA3-NAE1 E1 enzyme. E1 activates NEDD8 by first adenylating its C-terminal glycine residue with ATP, thereafter linking this residue to the side chain of the catalytic cysteine, yielding a NEDD8-UBA3 thioester and free AMP. E1 finally transfers NEDD8 to the catalytic cysteine of UBE2M (By similarity). The covalent attachment of NEDD8 to target proteins is known as 'neddylation' and the process is involved in the regulation of cell growth, viability and development.</text>
</comment>
<comment type="pathway">
    <text>Protein modification; protein neddylation.</text>
</comment>
<comment type="subunit">
    <text evidence="1">Heterodimer of UBA3 and NAE1. The complex binds NEDD8 and UBE2M (By similarity).</text>
</comment>
<comment type="similarity">
    <text evidence="3">Belongs to the ubiquitin-activating E1 family. ULA1 subfamily.</text>
</comment>
<sequence length="535" mass="60484">MAQPGRASLKEQRYDRQLRLWGDHGQEALESAHVCVINATATGTEILKNLVLPGIGSFTIVDGNRVSGEDVGNNFFLQKSHIGQSRAQSATELLQELNNDVSGNFVEESPETLLDNDPSFFNRFNLVVATQLSESTVLRLAELLWNSNIPLLICRTYGLVGYMRIIIKEHPVVESHPDNALEDLRLDKQFPELTEHIQSYDLDHMDKKDHSHTPWIVIVAKYLTKWFNEKSDQLPKSYKEKEAFRQLIRQGILKNENGTPEDEENFEEAIKNVNTALNTTKIPRCIEEIFNDDCCVNLTEQSPSFWILVRAVKEFVANEGQGCLPVRGTIPDMIADSSKFIKLQNVYREKAKRDIAAVGNHAAKLLQSLGKAPESISERELKLLCSNSAFLRVVRCRSLSEEYGLNTFNKDEIISNMDNPDSEVVLYLMLRAVDRFYKQHGRYPGVYNYQVEDDIGKLKSCLTSFLQEHGLSVLVKDDYVHEFCRYGAAEPHAIAAFMGGAAAQEIIKVITGQFVIFNNTYIYSGMSQTSATFQL</sequence>
<gene>
    <name type="primary">NAE1</name>
    <name type="synonym">APPBP1</name>
    <name type="ORF">RCJMB04_27g6</name>
</gene>
<protein>
    <recommendedName>
        <fullName>NEDD8-activating enzyme E1 regulatory subunit</fullName>
    </recommendedName>
    <alternativeName>
        <fullName>APP-BP1</fullName>
    </alternativeName>
    <alternativeName>
        <fullName>Amyloid protein-binding protein 1</fullName>
    </alternativeName>
</protein>
<accession>Q5ZIE6</accession>
<evidence type="ECO:0000250" key="1"/>
<evidence type="ECO:0000250" key="2">
    <source>
        <dbReference type="UniProtKB" id="Q13564"/>
    </source>
</evidence>
<evidence type="ECO:0000305" key="3"/>
<organism>
    <name type="scientific">Gallus gallus</name>
    <name type="common">Chicken</name>
    <dbReference type="NCBI Taxonomy" id="9031"/>
    <lineage>
        <taxon>Eukaryota</taxon>
        <taxon>Metazoa</taxon>
        <taxon>Chordata</taxon>
        <taxon>Craniata</taxon>
        <taxon>Vertebrata</taxon>
        <taxon>Euteleostomi</taxon>
        <taxon>Archelosauria</taxon>
        <taxon>Archosauria</taxon>
        <taxon>Dinosauria</taxon>
        <taxon>Saurischia</taxon>
        <taxon>Theropoda</taxon>
        <taxon>Coelurosauria</taxon>
        <taxon>Aves</taxon>
        <taxon>Neognathae</taxon>
        <taxon>Galloanserae</taxon>
        <taxon>Galliformes</taxon>
        <taxon>Phasianidae</taxon>
        <taxon>Phasianinae</taxon>
        <taxon>Gallus</taxon>
    </lineage>
</organism>
<proteinExistence type="evidence at transcript level"/>
<keyword id="KW-1185">Reference proteome</keyword>
<keyword id="KW-0833">Ubl conjugation pathway</keyword>
<dbReference type="EMBL" id="AJ720838">
    <property type="protein sequence ID" value="CAG32497.1"/>
    <property type="molecule type" value="mRNA"/>
</dbReference>
<dbReference type="RefSeq" id="NP_001006129.1">
    <property type="nucleotide sequence ID" value="NM_001006129.2"/>
</dbReference>
<dbReference type="SMR" id="Q5ZIE6"/>
<dbReference type="FunCoup" id="Q5ZIE6">
    <property type="interactions" value="3246"/>
</dbReference>
<dbReference type="STRING" id="9031.ENSGALP00000050474"/>
<dbReference type="PaxDb" id="9031-ENSGALP00000008356"/>
<dbReference type="GeneID" id="415792"/>
<dbReference type="KEGG" id="gga:415792"/>
<dbReference type="CTD" id="8883"/>
<dbReference type="VEuPathDB" id="HostDB:geneid_415792"/>
<dbReference type="eggNOG" id="KOG2016">
    <property type="taxonomic scope" value="Eukaryota"/>
</dbReference>
<dbReference type="InParanoid" id="Q5ZIE6"/>
<dbReference type="OrthoDB" id="1708823at2759"/>
<dbReference type="PhylomeDB" id="Q5ZIE6"/>
<dbReference type="UniPathway" id="UPA00885"/>
<dbReference type="PRO" id="PR:Q5ZIE6"/>
<dbReference type="Proteomes" id="UP000000539">
    <property type="component" value="Unassembled WGS sequence"/>
</dbReference>
<dbReference type="GO" id="GO:0019781">
    <property type="term" value="F:NEDD8 activating enzyme activity"/>
    <property type="evidence" value="ECO:0007669"/>
    <property type="project" value="InterPro"/>
</dbReference>
<dbReference type="GO" id="GO:0045116">
    <property type="term" value="P:protein neddylation"/>
    <property type="evidence" value="ECO:0000250"/>
    <property type="project" value="UniProtKB"/>
</dbReference>
<dbReference type="CDD" id="cd01493">
    <property type="entry name" value="APPBP1_RUB"/>
    <property type="match status" value="1"/>
</dbReference>
<dbReference type="FunFam" id="3.40.50.720:FF:000174">
    <property type="entry name" value="NEDD8-activating enzyme E1 regulatory subunit"/>
    <property type="match status" value="1"/>
</dbReference>
<dbReference type="FunFam" id="3.40.50.720:FF:000187">
    <property type="entry name" value="NEDD8-activating enzyme E1 regulatory subunit"/>
    <property type="match status" value="1"/>
</dbReference>
<dbReference type="Gene3D" id="3.40.50.720">
    <property type="entry name" value="NAD(P)-binding Rossmann-like Domain"/>
    <property type="match status" value="2"/>
</dbReference>
<dbReference type="InterPro" id="IPR030667">
    <property type="entry name" value="APP-BP1"/>
</dbReference>
<dbReference type="InterPro" id="IPR045886">
    <property type="entry name" value="ThiF/MoeB/HesA"/>
</dbReference>
<dbReference type="InterPro" id="IPR000594">
    <property type="entry name" value="ThiF_NAD_FAD-bd"/>
</dbReference>
<dbReference type="InterPro" id="IPR035985">
    <property type="entry name" value="Ubiquitin-activating_enz"/>
</dbReference>
<dbReference type="PANTHER" id="PTHR10953:SF29">
    <property type="entry name" value="NEDD8-ACTIVATING ENZYME E1 REGULATORY SUBUNIT"/>
    <property type="match status" value="1"/>
</dbReference>
<dbReference type="PANTHER" id="PTHR10953">
    <property type="entry name" value="UBIQUITIN-ACTIVATING ENZYME E1"/>
    <property type="match status" value="1"/>
</dbReference>
<dbReference type="Pfam" id="PF00899">
    <property type="entry name" value="ThiF"/>
    <property type="match status" value="1"/>
</dbReference>
<dbReference type="PIRSF" id="PIRSF039099">
    <property type="entry name" value="APP-BP1"/>
    <property type="match status" value="1"/>
</dbReference>
<dbReference type="SUPFAM" id="SSF69572">
    <property type="entry name" value="Activating enzymes of the ubiquitin-like proteins"/>
    <property type="match status" value="1"/>
</dbReference>
<feature type="chain" id="PRO_0000194956" description="NEDD8-activating enzyme E1 regulatory subunit">
    <location>
        <begin position="1"/>
        <end position="535"/>
    </location>
</feature>
<feature type="region of interest" description="Interaction with UBA3" evidence="1">
    <location>
        <begin position="332"/>
        <end position="345"/>
    </location>
</feature>
<feature type="site" description="Interaction with UBA3" evidence="1">
    <location>
        <position position="212"/>
    </location>
</feature>